<sequence>MASQGTKRSYEQMETGGERQNATEIRASVGRMVGGIGRFYIQMCTELKLSDYEGRLIQNSITIERMVLSAFDERRNKYLEEHPSAGKDPKKTGGPIYRRRDGKWMRELILYDKEEIRRIWRQANNGEDATAGLTHLMIWHSNLNDATYQRTRALVRTGMDPRMCSLMQGSTLPRRSGAAGAAVKGVGTMVMELIRMIKRGINDRNFWRGENGRRTRIAYERMCNILKGKFQTAAQRAMMDQVRESRNPGNAEIEDLIFLARSALILRGSVAHKSCLPACVYGLAVASGYDFEREGYSLVGIDPFRLLQNSQVFSLIRPNENPAHKSQLVWMACHSAAFEDLRVSSFIRGTRVVPRGQLSTRGVQIASNENMETMDSSTLELRSRYWAIRTRSGGNTNQQRASAGQISVQPTFSVQRNLPFERATIMAAFTGNTEGRTSDMRTEIIRMMESARPEDVSFQGRGVFELSDEKATNPIVPSFDMSNEGSYFFGDNAEEYDN</sequence>
<proteinExistence type="inferred from homology"/>
<dbReference type="EMBL" id="M30764">
    <property type="protein sequence ID" value="AAA43485.1"/>
    <property type="molecule type" value="Genomic_RNA"/>
</dbReference>
<dbReference type="SMR" id="P69297"/>
<dbReference type="GO" id="GO:0019029">
    <property type="term" value="C:helical viral capsid"/>
    <property type="evidence" value="ECO:0007669"/>
    <property type="project" value="UniProtKB-UniRule"/>
</dbReference>
<dbReference type="GO" id="GO:0043657">
    <property type="term" value="C:host cell"/>
    <property type="evidence" value="ECO:0007669"/>
    <property type="project" value="GOC"/>
</dbReference>
<dbReference type="GO" id="GO:0042025">
    <property type="term" value="C:host cell nucleus"/>
    <property type="evidence" value="ECO:0007669"/>
    <property type="project" value="UniProtKB-SubCell"/>
</dbReference>
<dbReference type="GO" id="GO:1990904">
    <property type="term" value="C:ribonucleoprotein complex"/>
    <property type="evidence" value="ECO:0007669"/>
    <property type="project" value="UniProtKB-KW"/>
</dbReference>
<dbReference type="GO" id="GO:0019013">
    <property type="term" value="C:viral nucleocapsid"/>
    <property type="evidence" value="ECO:0007669"/>
    <property type="project" value="UniProtKB-UniRule"/>
</dbReference>
<dbReference type="GO" id="GO:0003723">
    <property type="term" value="F:RNA binding"/>
    <property type="evidence" value="ECO:0007669"/>
    <property type="project" value="UniProtKB-UniRule"/>
</dbReference>
<dbReference type="GO" id="GO:0005198">
    <property type="term" value="F:structural molecule activity"/>
    <property type="evidence" value="ECO:0007669"/>
    <property type="project" value="UniProtKB-UniRule"/>
</dbReference>
<dbReference type="GO" id="GO:0046718">
    <property type="term" value="P:symbiont entry into host cell"/>
    <property type="evidence" value="ECO:0007669"/>
    <property type="project" value="UniProtKB-KW"/>
</dbReference>
<dbReference type="GO" id="GO:0075732">
    <property type="term" value="P:viral penetration into host nucleus"/>
    <property type="evidence" value="ECO:0007669"/>
    <property type="project" value="UniProtKB-UniRule"/>
</dbReference>
<dbReference type="HAMAP" id="MF_04070">
    <property type="entry name" value="INFV_NCAP"/>
    <property type="match status" value="1"/>
</dbReference>
<dbReference type="InterPro" id="IPR002141">
    <property type="entry name" value="Flu_NP"/>
</dbReference>
<dbReference type="Pfam" id="PF00506">
    <property type="entry name" value="Flu_NP"/>
    <property type="match status" value="1"/>
</dbReference>
<dbReference type="SUPFAM" id="SSF161003">
    <property type="entry name" value="flu NP-like"/>
    <property type="match status" value="1"/>
</dbReference>
<protein>
    <recommendedName>
        <fullName evidence="1">Nucleoprotein</fullName>
    </recommendedName>
    <alternativeName>
        <fullName evidence="1">Nucleocapsid protein</fullName>
        <shortName evidence="1">Protein N</shortName>
    </alternativeName>
</protein>
<evidence type="ECO:0000255" key="1">
    <source>
        <dbReference type="HAMAP-Rule" id="MF_04070"/>
    </source>
</evidence>
<evidence type="ECO:0000256" key="2">
    <source>
        <dbReference type="SAM" id="MobiDB-lite"/>
    </source>
</evidence>
<reference key="1">
    <citation type="journal article" date="1990" name="J. Virol.">
        <title>Evolution of the nucleoprotein gene of influenza A virus.</title>
        <authorList>
            <person name="Gorman O.T."/>
            <person name="Bean W.J."/>
            <person name="Kawaoka Y."/>
            <person name="Webster R.G."/>
        </authorList>
    </citation>
    <scope>NUCLEOTIDE SEQUENCE [GENOMIC RNA]</scope>
</reference>
<organismHost>
    <name type="scientific">Aves</name>
    <dbReference type="NCBI Taxonomy" id="8782"/>
</organismHost>
<organism>
    <name type="scientific">Influenza A virus (strain A/Mallard/Astrakhan/244/1982 H14N6)</name>
    <name type="common">Influenza A virus (strain A/Mallard/Gurjev/244/1982 H14N6)</name>
    <dbReference type="NCBI Taxonomy" id="11433"/>
    <lineage>
        <taxon>Viruses</taxon>
        <taxon>Riboviria</taxon>
        <taxon>Orthornavirae</taxon>
        <taxon>Negarnaviricota</taxon>
        <taxon>Polyploviricotina</taxon>
        <taxon>Insthoviricetes</taxon>
        <taxon>Articulavirales</taxon>
        <taxon>Orthomyxoviridae</taxon>
        <taxon>Alphainfluenzavirus</taxon>
        <taxon>Alphainfluenzavirus influenzae</taxon>
        <taxon>Influenza A virus</taxon>
    </lineage>
</organism>
<accession>P69297</accession>
<accession>P15675</accession>
<accession>P16977</accession>
<comment type="function">
    <text evidence="1">Encapsidates the negative strand viral RNA, protecting it from nucleases. The encapsidated genomic RNA is termed the ribonucleoprotein (RNP) and serves as template for transcription and replication. The RNP needs to be localized in the host nucleus to start an infectious cycle, but is too large to diffuse through the nuclear pore complex. NP comprises at least 2 nuclear localization signals that are responsible for the active RNP import into the nucleus through cellular importin alpha/beta pathway. Later in the infection, nclear export of RNPs are mediated through viral proteins NEP interacting with M1 which binds nucleoproteins. It is possible that nucleoprotein binds directly host exportin-1/XPO1 and plays an active role in RNPs nuclear export. M1 interaction with RNP seems to hide nucleoprotein's nuclear localization signals. Soon after a virion infects a new cell, M1 dissociates from the RNP under acidification of the virion driven by M2 protein. Dissociation of M1 from RNP unmasks nucleoprotein's nuclear localization signals, targeting the RNP to the nucleus.</text>
</comment>
<comment type="subunit">
    <text evidence="1">Homomultimerizes to form the nucleocapsid. May bind host exportin-1/XPO1. Binds to viral genomic RNA. Protein-RNA contacts are mediated by a combination of electrostatic interactions between positively charged residues and the phosphate backbone and planar interactions between aromatic side chains and bases.</text>
</comment>
<comment type="subcellular location">
    <subcellularLocation>
        <location evidence="1">Virion</location>
    </subcellularLocation>
    <subcellularLocation>
        <location evidence="1">Host nucleus</location>
    </subcellularLocation>
</comment>
<comment type="PTM">
    <text evidence="1">Late in virus-infected cells, may be cleaved from a 56-kDa protein to a 53-kDa protein by a cellular caspase. This cleavage might be a marker for the onset of apoptosis in infected cells or have a specific function in virus host interaction.</text>
</comment>
<comment type="similarity">
    <text evidence="1">Belongs to the influenza viruses nucleoprotein family.</text>
</comment>
<keyword id="KW-0167">Capsid protein</keyword>
<keyword id="KW-1139">Helical capsid protein</keyword>
<keyword id="KW-1048">Host nucleus</keyword>
<keyword id="KW-0945">Host-virus interaction</keyword>
<keyword id="KW-0687">Ribonucleoprotein</keyword>
<keyword id="KW-0694">RNA-binding</keyword>
<keyword id="KW-0543">Viral nucleoprotein</keyword>
<keyword id="KW-1163">Viral penetration into host nucleus</keyword>
<keyword id="KW-0946">Virion</keyword>
<keyword id="KW-1160">Virus entry into host cell</keyword>
<gene>
    <name evidence="1" type="primary">NP</name>
</gene>
<name>NCAP_I82A0</name>
<feature type="chain" id="PRO_0000079072" description="Nucleoprotein">
    <location>
        <begin position="1"/>
        <end position="498"/>
    </location>
</feature>
<feature type="region of interest" description="Disordered" evidence="2">
    <location>
        <begin position="1"/>
        <end position="21"/>
    </location>
</feature>
<feature type="short sequence motif" description="Unconventional nuclear localization signal" evidence="1">
    <location>
        <begin position="1"/>
        <end position="18"/>
    </location>
</feature>
<feature type="short sequence motif" description="Bipartite nuclear localization signal" evidence="1">
    <location>
        <begin position="198"/>
        <end position="216"/>
    </location>
</feature>